<keyword id="KW-0997">Cell inner membrane</keyword>
<keyword id="KW-1003">Cell membrane</keyword>
<keyword id="KW-0328">Glycosyltransferase</keyword>
<keyword id="KW-0472">Membrane</keyword>
<keyword id="KW-0808">Transferase</keyword>
<dbReference type="EC" id="2.4.1.325" evidence="1"/>
<dbReference type="EMBL" id="CU928163">
    <property type="protein sequence ID" value="CAR15453.1"/>
    <property type="molecule type" value="Genomic_DNA"/>
</dbReference>
<dbReference type="RefSeq" id="WP_000217257.1">
    <property type="nucleotide sequence ID" value="NC_011751.1"/>
</dbReference>
<dbReference type="RefSeq" id="YP_002414949.1">
    <property type="nucleotide sequence ID" value="NC_011751.1"/>
</dbReference>
<dbReference type="SMR" id="B7NF98"/>
<dbReference type="STRING" id="585056.ECUMN_4318"/>
<dbReference type="CAZy" id="GT56">
    <property type="family name" value="Glycosyltransferase Family 56"/>
</dbReference>
<dbReference type="KEGG" id="eum:ECUMN_4318"/>
<dbReference type="PATRIC" id="fig|585056.7.peg.4484"/>
<dbReference type="HOGENOM" id="CLU_066584_0_0_6"/>
<dbReference type="UniPathway" id="UPA00566"/>
<dbReference type="Proteomes" id="UP000007097">
    <property type="component" value="Chromosome"/>
</dbReference>
<dbReference type="GO" id="GO:0005886">
    <property type="term" value="C:plasma membrane"/>
    <property type="evidence" value="ECO:0007669"/>
    <property type="project" value="UniProtKB-SubCell"/>
</dbReference>
<dbReference type="GO" id="GO:0102031">
    <property type="term" value="F:4-acetamido-4,6-dideoxy-D-galactose transferase activity"/>
    <property type="evidence" value="ECO:0007669"/>
    <property type="project" value="UniProtKB-EC"/>
</dbReference>
<dbReference type="GO" id="GO:0008417">
    <property type="term" value="F:fucosyltransferase activity"/>
    <property type="evidence" value="ECO:0007669"/>
    <property type="project" value="InterPro"/>
</dbReference>
<dbReference type="GO" id="GO:0009246">
    <property type="term" value="P:enterobacterial common antigen biosynthetic process"/>
    <property type="evidence" value="ECO:0007669"/>
    <property type="project" value="UniProtKB-UniRule"/>
</dbReference>
<dbReference type="GO" id="GO:0036065">
    <property type="term" value="P:fucosylation"/>
    <property type="evidence" value="ECO:0007669"/>
    <property type="project" value="InterPro"/>
</dbReference>
<dbReference type="HAMAP" id="MF_01002">
    <property type="entry name" value="WecF_RffT"/>
    <property type="match status" value="1"/>
</dbReference>
<dbReference type="InterPro" id="IPR009993">
    <property type="entry name" value="WecF"/>
</dbReference>
<dbReference type="NCBIfam" id="NF002752">
    <property type="entry name" value="PRK02797.1-1"/>
    <property type="match status" value="1"/>
</dbReference>
<dbReference type="NCBIfam" id="NF002753">
    <property type="entry name" value="PRK02797.1-2"/>
    <property type="match status" value="1"/>
</dbReference>
<dbReference type="NCBIfam" id="NF002754">
    <property type="entry name" value="PRK02797.1-3"/>
    <property type="match status" value="1"/>
</dbReference>
<dbReference type="Pfam" id="PF07429">
    <property type="entry name" value="Glyco_transf_56"/>
    <property type="match status" value="1"/>
</dbReference>
<accession>B7NF98</accession>
<feature type="chain" id="PRO_1000134599" description="TDP-N-acetylfucosamine:lipid II N-acetylfucosaminyltransferase">
    <location>
        <begin position="1"/>
        <end position="359"/>
    </location>
</feature>
<reference key="1">
    <citation type="journal article" date="2009" name="PLoS Genet.">
        <title>Organised genome dynamics in the Escherichia coli species results in highly diverse adaptive paths.</title>
        <authorList>
            <person name="Touchon M."/>
            <person name="Hoede C."/>
            <person name="Tenaillon O."/>
            <person name="Barbe V."/>
            <person name="Baeriswyl S."/>
            <person name="Bidet P."/>
            <person name="Bingen E."/>
            <person name="Bonacorsi S."/>
            <person name="Bouchier C."/>
            <person name="Bouvet O."/>
            <person name="Calteau A."/>
            <person name="Chiapello H."/>
            <person name="Clermont O."/>
            <person name="Cruveiller S."/>
            <person name="Danchin A."/>
            <person name="Diard M."/>
            <person name="Dossat C."/>
            <person name="Karoui M.E."/>
            <person name="Frapy E."/>
            <person name="Garry L."/>
            <person name="Ghigo J.M."/>
            <person name="Gilles A.M."/>
            <person name="Johnson J."/>
            <person name="Le Bouguenec C."/>
            <person name="Lescat M."/>
            <person name="Mangenot S."/>
            <person name="Martinez-Jehanne V."/>
            <person name="Matic I."/>
            <person name="Nassif X."/>
            <person name="Oztas S."/>
            <person name="Petit M.A."/>
            <person name="Pichon C."/>
            <person name="Rouy Z."/>
            <person name="Ruf C.S."/>
            <person name="Schneider D."/>
            <person name="Tourret J."/>
            <person name="Vacherie B."/>
            <person name="Vallenet D."/>
            <person name="Medigue C."/>
            <person name="Rocha E.P.C."/>
            <person name="Denamur E."/>
        </authorList>
    </citation>
    <scope>NUCLEOTIDE SEQUENCE [LARGE SCALE GENOMIC DNA]</scope>
    <source>
        <strain>UMN026 / ExPEC</strain>
    </source>
</reference>
<name>WECF_ECOLU</name>
<sequence>MTVLIHVLGSDIPHHNRTVLRFFNDALAATSEHAREFMVVGKDDGLSDSCPALSVQFFPGKKSLAEAVIAKAKANRQQRFFFHGQFNPTLWLALLSGGIKPSQFYWHIWGADLYELSSGLRYKLFYPLRRLAQKRVGCVFATRGDLSFFAKTHPKVRGELLYFPTRMDPSLNMMANDRQRKGKMTILVGNSGDRSNEHIAALRAVHQQFGDTVKVVVPMGYPPNNEAYIEEVRQAGLALFSEENLQILNEKLEFDAYLALLRQCDLGYFIFARQQGIGTLCLLIQAGIPCVLNRENPFWQDMTEQHLPVLFTTDDLNEDIVREAQRQLASVDKNTIAFFSPNYLQGWQRALAIAAGEVA</sequence>
<comment type="function">
    <text evidence="1">Catalyzes the synthesis of Und-PP-GlcNAc-ManNAcA-Fuc4NAc (Lipid III), the third lipid-linked intermediate involved in ECA synthesis.</text>
</comment>
<comment type="catalytic activity">
    <reaction evidence="1">
        <text>beta-D-ManNAcA-(1-&gt;4)-alpha-D-GlcNAc-di-trans,octa-cis-undecaprenyl diphosphate + dTDP-4-acetamido-4,6-dideoxy-alpha-D-galactose = alpha-D-FucNAc4-(1-&gt;4)-beta-D-ManNAcA-(1-&gt;4)-D-GlcNAc-undecaprenyl diphosphate + dTDP + H(+)</text>
        <dbReference type="Rhea" id="RHEA:28759"/>
        <dbReference type="ChEBI" id="CHEBI:15378"/>
        <dbReference type="ChEBI" id="CHEBI:58369"/>
        <dbReference type="ChEBI" id="CHEBI:61495"/>
        <dbReference type="ChEBI" id="CHEBI:61496"/>
        <dbReference type="ChEBI" id="CHEBI:68493"/>
        <dbReference type="EC" id="2.4.1.325"/>
    </reaction>
</comment>
<comment type="pathway">
    <text evidence="1">Bacterial outer membrane biogenesis; enterobacterial common antigen biosynthesis.</text>
</comment>
<comment type="subcellular location">
    <subcellularLocation>
        <location evidence="1">Cell inner membrane</location>
        <topology evidence="1">Peripheral membrane protein</topology>
    </subcellularLocation>
</comment>
<comment type="similarity">
    <text evidence="1">Belongs to the glycosyltransferase 56 family.</text>
</comment>
<proteinExistence type="inferred from homology"/>
<gene>
    <name evidence="1" type="primary">wecF</name>
    <name evidence="1" type="synonym">rffT</name>
    <name type="ordered locus">ECUMN_4318</name>
</gene>
<protein>
    <recommendedName>
        <fullName evidence="1">TDP-N-acetylfucosamine:lipid II N-acetylfucosaminyltransferase</fullName>
        <ecNumber evidence="1">2.4.1.325</ecNumber>
    </recommendedName>
    <alternativeName>
        <fullName evidence="1">4-alpha-L-fucosyltransferase</fullName>
    </alternativeName>
    <alternativeName>
        <fullName evidence="1">TDP-Fuc4NAc:lipid II Fuc4NAc transferase</fullName>
        <shortName evidence="1">Fuc4NAc transferase</shortName>
    </alternativeName>
</protein>
<organism>
    <name type="scientific">Escherichia coli O17:K52:H18 (strain UMN026 / ExPEC)</name>
    <dbReference type="NCBI Taxonomy" id="585056"/>
    <lineage>
        <taxon>Bacteria</taxon>
        <taxon>Pseudomonadati</taxon>
        <taxon>Pseudomonadota</taxon>
        <taxon>Gammaproteobacteria</taxon>
        <taxon>Enterobacterales</taxon>
        <taxon>Enterobacteriaceae</taxon>
        <taxon>Escherichia</taxon>
    </lineage>
</organism>
<evidence type="ECO:0000255" key="1">
    <source>
        <dbReference type="HAMAP-Rule" id="MF_01002"/>
    </source>
</evidence>